<dbReference type="EC" id="3.5.1.2" evidence="1"/>
<dbReference type="EMBL" id="U00096">
    <property type="protein sequence ID" value="AAC74597.1"/>
    <property type="molecule type" value="Genomic_DNA"/>
</dbReference>
<dbReference type="EMBL" id="AP009048">
    <property type="protein sequence ID" value="BAA15206.1"/>
    <property type="molecule type" value="Genomic_DNA"/>
</dbReference>
<dbReference type="PIR" id="G64906">
    <property type="entry name" value="G64906"/>
</dbReference>
<dbReference type="RefSeq" id="NP_416041.1">
    <property type="nucleotide sequence ID" value="NC_000913.3"/>
</dbReference>
<dbReference type="SMR" id="P0A6W0"/>
<dbReference type="BioGRID" id="4261695">
    <property type="interactions" value="11"/>
</dbReference>
<dbReference type="DIP" id="DIP-12757N"/>
<dbReference type="FunCoup" id="P0A6W0">
    <property type="interactions" value="297"/>
</dbReference>
<dbReference type="IntAct" id="P0A6W0">
    <property type="interactions" value="3"/>
</dbReference>
<dbReference type="STRING" id="511145.b1524"/>
<dbReference type="jPOST" id="P0A6W0"/>
<dbReference type="PaxDb" id="511145-b1524"/>
<dbReference type="EnsemblBacteria" id="AAC74597">
    <property type="protein sequence ID" value="AAC74597"/>
    <property type="gene ID" value="b1524"/>
</dbReference>
<dbReference type="GeneID" id="944973"/>
<dbReference type="KEGG" id="ecj:JW1517"/>
<dbReference type="KEGG" id="eco:b1524"/>
<dbReference type="KEGG" id="ecoc:C3026_08810"/>
<dbReference type="PATRIC" id="fig|1411691.4.peg.742"/>
<dbReference type="EchoBASE" id="EB3577"/>
<dbReference type="eggNOG" id="COG2066">
    <property type="taxonomic scope" value="Bacteria"/>
</dbReference>
<dbReference type="HOGENOM" id="CLU_027932_1_1_6"/>
<dbReference type="InParanoid" id="P0A6W0"/>
<dbReference type="OMA" id="RPRNPFI"/>
<dbReference type="OrthoDB" id="9788822at2"/>
<dbReference type="PhylomeDB" id="P0A6W0"/>
<dbReference type="BioCyc" id="EcoCyc:G6810-MONOMER"/>
<dbReference type="BioCyc" id="MetaCyc:G6810-MONOMER"/>
<dbReference type="BRENDA" id="3.5.1.2">
    <property type="organism ID" value="2026"/>
</dbReference>
<dbReference type="SABIO-RK" id="P0A6W0"/>
<dbReference type="PRO" id="PR:P0A6W0"/>
<dbReference type="Proteomes" id="UP000000625">
    <property type="component" value="Chromosome"/>
</dbReference>
<dbReference type="GO" id="GO:0004359">
    <property type="term" value="F:glutaminase activity"/>
    <property type="evidence" value="ECO:0000314"/>
    <property type="project" value="EcoCyc"/>
</dbReference>
<dbReference type="GO" id="GO:0042803">
    <property type="term" value="F:protein homodimerization activity"/>
    <property type="evidence" value="ECO:0000314"/>
    <property type="project" value="EcoCyc"/>
</dbReference>
<dbReference type="GO" id="GO:0006537">
    <property type="term" value="P:glutamate biosynthetic process"/>
    <property type="evidence" value="ECO:0000318"/>
    <property type="project" value="GO_Central"/>
</dbReference>
<dbReference type="GO" id="GO:0006543">
    <property type="term" value="P:glutamine catabolic process"/>
    <property type="evidence" value="ECO:0000315"/>
    <property type="project" value="EcoCyc"/>
</dbReference>
<dbReference type="GO" id="GO:0045926">
    <property type="term" value="P:negative regulation of growth"/>
    <property type="evidence" value="ECO:0000315"/>
    <property type="project" value="EcoliWiki"/>
</dbReference>
<dbReference type="FunFam" id="3.40.710.10:FF:000005">
    <property type="entry name" value="Glutaminase"/>
    <property type="match status" value="1"/>
</dbReference>
<dbReference type="Gene3D" id="3.40.710.10">
    <property type="entry name" value="DD-peptidase/beta-lactamase superfamily"/>
    <property type="match status" value="1"/>
</dbReference>
<dbReference type="HAMAP" id="MF_00313">
    <property type="entry name" value="Glutaminase"/>
    <property type="match status" value="1"/>
</dbReference>
<dbReference type="InterPro" id="IPR012338">
    <property type="entry name" value="Beta-lactam/transpept-like"/>
</dbReference>
<dbReference type="InterPro" id="IPR015868">
    <property type="entry name" value="Glutaminase"/>
</dbReference>
<dbReference type="NCBIfam" id="TIGR03814">
    <property type="entry name" value="Gln_ase"/>
    <property type="match status" value="1"/>
</dbReference>
<dbReference type="NCBIfam" id="NF002132">
    <property type="entry name" value="PRK00971.1-1"/>
    <property type="match status" value="1"/>
</dbReference>
<dbReference type="NCBIfam" id="NF002133">
    <property type="entry name" value="PRK00971.1-2"/>
    <property type="match status" value="1"/>
</dbReference>
<dbReference type="PANTHER" id="PTHR12544">
    <property type="entry name" value="GLUTAMINASE"/>
    <property type="match status" value="1"/>
</dbReference>
<dbReference type="PANTHER" id="PTHR12544:SF29">
    <property type="entry name" value="GLUTAMINASE"/>
    <property type="match status" value="1"/>
</dbReference>
<dbReference type="Pfam" id="PF04960">
    <property type="entry name" value="Glutaminase"/>
    <property type="match status" value="1"/>
</dbReference>
<dbReference type="SUPFAM" id="SSF56601">
    <property type="entry name" value="beta-lactamase/transpeptidase-like"/>
    <property type="match status" value="1"/>
</dbReference>
<accession>P0A6W0</accession>
<accession>P77470</accession>
<evidence type="ECO:0000255" key="1">
    <source>
        <dbReference type="HAMAP-Rule" id="MF_00313"/>
    </source>
</evidence>
<evidence type="ECO:0000269" key="2">
    <source>
    </source>
</evidence>
<proteinExistence type="evidence at protein level"/>
<gene>
    <name evidence="1" type="primary">glsA2</name>
    <name type="synonym">yneH</name>
    <name type="ordered locus">b1524</name>
    <name type="ordered locus">JW1517</name>
</gene>
<organism>
    <name type="scientific">Escherichia coli (strain K12)</name>
    <dbReference type="NCBI Taxonomy" id="83333"/>
    <lineage>
        <taxon>Bacteria</taxon>
        <taxon>Pseudomonadati</taxon>
        <taxon>Pseudomonadota</taxon>
        <taxon>Gammaproteobacteria</taxon>
        <taxon>Enterobacterales</taxon>
        <taxon>Enterobacteriaceae</taxon>
        <taxon>Escherichia</taxon>
    </lineage>
</organism>
<reference key="1">
    <citation type="journal article" date="1996" name="DNA Res.">
        <title>A 570-kb DNA sequence of the Escherichia coli K-12 genome corresponding to the 28.0-40.1 min region on the linkage map.</title>
        <authorList>
            <person name="Aiba H."/>
            <person name="Baba T."/>
            <person name="Fujita K."/>
            <person name="Hayashi K."/>
            <person name="Inada T."/>
            <person name="Isono K."/>
            <person name="Itoh T."/>
            <person name="Kasai H."/>
            <person name="Kashimoto K."/>
            <person name="Kimura S."/>
            <person name="Kitakawa M."/>
            <person name="Kitagawa M."/>
            <person name="Makino K."/>
            <person name="Miki T."/>
            <person name="Mizobuchi K."/>
            <person name="Mori H."/>
            <person name="Mori T."/>
            <person name="Motomura K."/>
            <person name="Nakade S."/>
            <person name="Nakamura Y."/>
            <person name="Nashimoto H."/>
            <person name="Nishio Y."/>
            <person name="Oshima T."/>
            <person name="Saito N."/>
            <person name="Sampei G."/>
            <person name="Seki Y."/>
            <person name="Sivasundaram S."/>
            <person name="Tagami H."/>
            <person name="Takeda J."/>
            <person name="Takemoto K."/>
            <person name="Takeuchi Y."/>
            <person name="Wada C."/>
            <person name="Yamamoto Y."/>
            <person name="Horiuchi T."/>
        </authorList>
    </citation>
    <scope>NUCLEOTIDE SEQUENCE [LARGE SCALE GENOMIC DNA]</scope>
    <source>
        <strain>K12 / W3110 / ATCC 27325 / DSM 5911</strain>
    </source>
</reference>
<reference key="2">
    <citation type="journal article" date="1997" name="Science">
        <title>The complete genome sequence of Escherichia coli K-12.</title>
        <authorList>
            <person name="Blattner F.R."/>
            <person name="Plunkett G. III"/>
            <person name="Bloch C.A."/>
            <person name="Perna N.T."/>
            <person name="Burland V."/>
            <person name="Riley M."/>
            <person name="Collado-Vides J."/>
            <person name="Glasner J.D."/>
            <person name="Rode C.K."/>
            <person name="Mayhew G.F."/>
            <person name="Gregor J."/>
            <person name="Davis N.W."/>
            <person name="Kirkpatrick H.A."/>
            <person name="Goeden M.A."/>
            <person name="Rose D.J."/>
            <person name="Mau B."/>
            <person name="Shao Y."/>
        </authorList>
    </citation>
    <scope>NUCLEOTIDE SEQUENCE [LARGE SCALE GENOMIC DNA]</scope>
    <source>
        <strain>K12 / MG1655 / ATCC 47076</strain>
    </source>
</reference>
<reference key="3">
    <citation type="journal article" date="2006" name="Mol. Syst. Biol.">
        <title>Highly accurate genome sequences of Escherichia coli K-12 strains MG1655 and W3110.</title>
        <authorList>
            <person name="Hayashi K."/>
            <person name="Morooka N."/>
            <person name="Yamamoto Y."/>
            <person name="Fujita K."/>
            <person name="Isono K."/>
            <person name="Choi S."/>
            <person name="Ohtsubo E."/>
            <person name="Baba T."/>
            <person name="Wanner B.L."/>
            <person name="Mori H."/>
            <person name="Horiuchi T."/>
        </authorList>
    </citation>
    <scope>NUCLEOTIDE SEQUENCE [LARGE SCALE GENOMIC DNA]</scope>
    <source>
        <strain>K12 / W3110 / ATCC 27325 / DSM 5911</strain>
    </source>
</reference>
<reference key="4">
    <citation type="journal article" date="2008" name="Biochemistry">
        <title>Functional and structural characterization of four glutaminases from Escherichia coli and Bacillus subtilis.</title>
        <authorList>
            <person name="Brown G."/>
            <person name="Singer A."/>
            <person name="Proudfoot M."/>
            <person name="Skarina T."/>
            <person name="Kim Y."/>
            <person name="Chang C."/>
            <person name="Dementieva I."/>
            <person name="Kuznetsova E."/>
            <person name="Gonzalez C.F."/>
            <person name="Joachimiak A."/>
            <person name="Savchenko A."/>
            <person name="Yakunin A.F."/>
        </authorList>
    </citation>
    <scope>CATALYTIC ACTIVITY</scope>
    <scope>BIOPHYSICOCHEMICAL PROPERTIES</scope>
    <scope>SUBUNIT</scope>
</reference>
<comment type="catalytic activity">
    <reaction evidence="1 2">
        <text>L-glutamine + H2O = L-glutamate + NH4(+)</text>
        <dbReference type="Rhea" id="RHEA:15889"/>
        <dbReference type="ChEBI" id="CHEBI:15377"/>
        <dbReference type="ChEBI" id="CHEBI:28938"/>
        <dbReference type="ChEBI" id="CHEBI:29985"/>
        <dbReference type="ChEBI" id="CHEBI:58359"/>
        <dbReference type="EC" id="3.5.1.2"/>
    </reaction>
</comment>
<comment type="biophysicochemical properties">
    <kinetics>
        <KM evidence="2">30.6 mM for glutamine</KM>
    </kinetics>
</comment>
<comment type="subunit">
    <text evidence="1 2">Homotetramer.</text>
</comment>
<comment type="similarity">
    <text evidence="1">Belongs to the glutaminase family.</text>
</comment>
<protein>
    <recommendedName>
        <fullName evidence="1">Glutaminase 2</fullName>
        <ecNumber evidence="1">3.5.1.2</ecNumber>
    </recommendedName>
</protein>
<sequence>MAVAMDNAILENILRQVRPLIGQGKVADYIPALATVDGSRLGIAICTVDGQLFQAGDAQERFSIQSISKVLSLVVAMRHYSEEEIWQRVGKDPSGSPFNSLVQLEMEQGIPRNPFINAGALVVCDMLQGRLSAPRQRMLEVVRGLSGVSDISYDTVVARSEFEHSARNAAIAWLMKSFGNFHHDVTTVLQNYFHYCALKMSCVELARTFVFLANQGKAIHIDEPVVTPMQARQINALMATSGMYQNAGEFAWRVGLPAKSGVGGGIVAIVPHEMAIAVWSPELDDAGNSLAGIAVLEQLTKQLGRSVY</sequence>
<keyword id="KW-0378">Hydrolase</keyword>
<keyword id="KW-1185">Reference proteome</keyword>
<feature type="chain" id="PRO_0000110608" description="Glutaminase 2">
    <location>
        <begin position="1"/>
        <end position="308"/>
    </location>
</feature>
<feature type="binding site" evidence="1">
    <location>
        <position position="66"/>
    </location>
    <ligand>
        <name>substrate</name>
    </ligand>
</feature>
<feature type="binding site" evidence="1">
    <location>
        <position position="117"/>
    </location>
    <ligand>
        <name>substrate</name>
    </ligand>
</feature>
<feature type="binding site" evidence="1">
    <location>
        <position position="161"/>
    </location>
    <ligand>
        <name>substrate</name>
    </ligand>
</feature>
<feature type="binding site" evidence="1">
    <location>
        <position position="168"/>
    </location>
    <ligand>
        <name>substrate</name>
    </ligand>
</feature>
<feature type="binding site" evidence="1">
    <location>
        <position position="192"/>
    </location>
    <ligand>
        <name>substrate</name>
    </ligand>
</feature>
<feature type="binding site" evidence="1">
    <location>
        <position position="244"/>
    </location>
    <ligand>
        <name>substrate</name>
    </ligand>
</feature>
<feature type="binding site" evidence="1">
    <location>
        <position position="262"/>
    </location>
    <ligand>
        <name>substrate</name>
    </ligand>
</feature>
<name>GLSA2_ECOLI</name>